<organism>
    <name type="scientific">Bifidobacterium adolescentis (strain ATCC 15703 / DSM 20083 / NCTC 11814 / E194a)</name>
    <dbReference type="NCBI Taxonomy" id="367928"/>
    <lineage>
        <taxon>Bacteria</taxon>
        <taxon>Bacillati</taxon>
        <taxon>Actinomycetota</taxon>
        <taxon>Actinomycetes</taxon>
        <taxon>Bifidobacteriales</taxon>
        <taxon>Bifidobacteriaceae</taxon>
        <taxon>Bifidobacterium</taxon>
    </lineage>
</organism>
<dbReference type="EC" id="3.1.26.5" evidence="1"/>
<dbReference type="EMBL" id="AP009256">
    <property type="protein sequence ID" value="BAF40411.1"/>
    <property type="molecule type" value="Genomic_DNA"/>
</dbReference>
<dbReference type="RefSeq" id="WP_003807160.1">
    <property type="nucleotide sequence ID" value="NZ_CAXVNC010000001.1"/>
</dbReference>
<dbReference type="SMR" id="A1A3X8"/>
<dbReference type="STRING" id="367928.BAD_1630"/>
<dbReference type="PaxDb" id="1680-BADO_1744"/>
<dbReference type="GeneID" id="4556667"/>
<dbReference type="KEGG" id="bad:BAD_1630"/>
<dbReference type="HOGENOM" id="CLU_117179_4_0_11"/>
<dbReference type="Proteomes" id="UP000008702">
    <property type="component" value="Chromosome"/>
</dbReference>
<dbReference type="GO" id="GO:0030677">
    <property type="term" value="C:ribonuclease P complex"/>
    <property type="evidence" value="ECO:0007669"/>
    <property type="project" value="TreeGrafter"/>
</dbReference>
<dbReference type="GO" id="GO:0042781">
    <property type="term" value="F:3'-tRNA processing endoribonuclease activity"/>
    <property type="evidence" value="ECO:0007669"/>
    <property type="project" value="TreeGrafter"/>
</dbReference>
<dbReference type="GO" id="GO:0004526">
    <property type="term" value="F:ribonuclease P activity"/>
    <property type="evidence" value="ECO:0007669"/>
    <property type="project" value="UniProtKB-UniRule"/>
</dbReference>
<dbReference type="GO" id="GO:0000049">
    <property type="term" value="F:tRNA binding"/>
    <property type="evidence" value="ECO:0007669"/>
    <property type="project" value="UniProtKB-UniRule"/>
</dbReference>
<dbReference type="GO" id="GO:0001682">
    <property type="term" value="P:tRNA 5'-leader removal"/>
    <property type="evidence" value="ECO:0007669"/>
    <property type="project" value="UniProtKB-UniRule"/>
</dbReference>
<dbReference type="Gene3D" id="3.30.230.10">
    <property type="match status" value="1"/>
</dbReference>
<dbReference type="HAMAP" id="MF_00227">
    <property type="entry name" value="RNase_P"/>
    <property type="match status" value="1"/>
</dbReference>
<dbReference type="InterPro" id="IPR020568">
    <property type="entry name" value="Ribosomal_Su5_D2-typ_SF"/>
</dbReference>
<dbReference type="InterPro" id="IPR014721">
    <property type="entry name" value="Ribsml_uS5_D2-typ_fold_subgr"/>
</dbReference>
<dbReference type="InterPro" id="IPR000100">
    <property type="entry name" value="RNase_P"/>
</dbReference>
<dbReference type="NCBIfam" id="TIGR00188">
    <property type="entry name" value="rnpA"/>
    <property type="match status" value="1"/>
</dbReference>
<dbReference type="PANTHER" id="PTHR33992">
    <property type="entry name" value="RIBONUCLEASE P PROTEIN COMPONENT"/>
    <property type="match status" value="1"/>
</dbReference>
<dbReference type="PANTHER" id="PTHR33992:SF1">
    <property type="entry name" value="RIBONUCLEASE P PROTEIN COMPONENT"/>
    <property type="match status" value="1"/>
</dbReference>
<dbReference type="Pfam" id="PF00825">
    <property type="entry name" value="Ribonuclease_P"/>
    <property type="match status" value="1"/>
</dbReference>
<dbReference type="SUPFAM" id="SSF54211">
    <property type="entry name" value="Ribosomal protein S5 domain 2-like"/>
    <property type="match status" value="1"/>
</dbReference>
<gene>
    <name evidence="1" type="primary">rnpA</name>
    <name type="ordered locus">BAD_1630</name>
</gene>
<accession>A1A3X8</accession>
<sequence length="121" mass="13753">MERLKSHRDFVAVLKRRRRVSREDIVVHYLMHDDVVTGDTATVQGRRVGLAVSKAVGNAVTRNAVKRRFRVLARKYESLLPESCDIVLRAKPSAARADFLSLEQQMASCFEAVKRKTASRQ</sequence>
<name>RNPA_BIFAA</name>
<comment type="function">
    <text evidence="1">RNaseP catalyzes the removal of the 5'-leader sequence from pre-tRNA to produce the mature 5'-terminus. It can also cleave other RNA substrates such as 4.5S RNA. The protein component plays an auxiliary but essential role in vivo by binding to the 5'-leader sequence and broadening the substrate specificity of the ribozyme.</text>
</comment>
<comment type="catalytic activity">
    <reaction evidence="1">
        <text>Endonucleolytic cleavage of RNA, removing 5'-extranucleotides from tRNA precursor.</text>
        <dbReference type="EC" id="3.1.26.5"/>
    </reaction>
</comment>
<comment type="subunit">
    <text evidence="1">Consists of a catalytic RNA component (M1 or rnpB) and a protein subunit.</text>
</comment>
<comment type="similarity">
    <text evidence="1">Belongs to the RnpA family.</text>
</comment>
<evidence type="ECO:0000255" key="1">
    <source>
        <dbReference type="HAMAP-Rule" id="MF_00227"/>
    </source>
</evidence>
<reference key="1">
    <citation type="submission" date="2006-12" db="EMBL/GenBank/DDBJ databases">
        <title>Bifidobacterium adolescentis complete genome sequence.</title>
        <authorList>
            <person name="Suzuki T."/>
            <person name="Tsuda Y."/>
            <person name="Kanou N."/>
            <person name="Inoue T."/>
            <person name="Kumazaki K."/>
            <person name="Nagano S."/>
            <person name="Hirai S."/>
            <person name="Tanaka K."/>
            <person name="Watanabe K."/>
        </authorList>
    </citation>
    <scope>NUCLEOTIDE SEQUENCE [LARGE SCALE GENOMIC DNA]</scope>
    <source>
        <strain>ATCC 15703 / DSM 20083 / NCTC 11814 / E194a</strain>
    </source>
</reference>
<feature type="chain" id="PRO_1000021377" description="Ribonuclease P protein component">
    <location>
        <begin position="1"/>
        <end position="121"/>
    </location>
</feature>
<keyword id="KW-0255">Endonuclease</keyword>
<keyword id="KW-0378">Hydrolase</keyword>
<keyword id="KW-0540">Nuclease</keyword>
<keyword id="KW-1185">Reference proteome</keyword>
<keyword id="KW-0694">RNA-binding</keyword>
<keyword id="KW-0819">tRNA processing</keyword>
<proteinExistence type="inferred from homology"/>
<protein>
    <recommendedName>
        <fullName evidence="1">Ribonuclease P protein component</fullName>
        <shortName evidence="1">RNase P protein</shortName>
        <shortName evidence="1">RNaseP protein</shortName>
        <ecNumber evidence="1">3.1.26.5</ecNumber>
    </recommendedName>
    <alternativeName>
        <fullName evidence="1">Protein C5</fullName>
    </alternativeName>
</protein>